<gene>
    <name evidence="1" type="primary">coaD</name>
    <name type="ordered locus">ECIAI1_3804</name>
</gene>
<organism>
    <name type="scientific">Escherichia coli O8 (strain IAI1)</name>
    <dbReference type="NCBI Taxonomy" id="585034"/>
    <lineage>
        <taxon>Bacteria</taxon>
        <taxon>Pseudomonadati</taxon>
        <taxon>Pseudomonadota</taxon>
        <taxon>Gammaproteobacteria</taxon>
        <taxon>Enterobacterales</taxon>
        <taxon>Enterobacteriaceae</taxon>
        <taxon>Escherichia</taxon>
    </lineage>
</organism>
<proteinExistence type="inferred from homology"/>
<protein>
    <recommendedName>
        <fullName evidence="1">Phosphopantetheine adenylyltransferase</fullName>
        <ecNumber evidence="1">2.7.7.3</ecNumber>
    </recommendedName>
    <alternativeName>
        <fullName evidence="1">Dephospho-CoA pyrophosphorylase</fullName>
    </alternativeName>
    <alternativeName>
        <fullName evidence="1">Pantetheine-phosphate adenylyltransferase</fullName>
        <shortName evidence="1">PPAT</shortName>
    </alternativeName>
</protein>
<feature type="chain" id="PRO_1000118078" description="Phosphopantetheine adenylyltransferase">
    <location>
        <begin position="1"/>
        <end position="159"/>
    </location>
</feature>
<feature type="binding site" evidence="1">
    <location>
        <begin position="10"/>
        <end position="11"/>
    </location>
    <ligand>
        <name>ATP</name>
        <dbReference type="ChEBI" id="CHEBI:30616"/>
    </ligand>
</feature>
<feature type="binding site" evidence="1">
    <location>
        <position position="10"/>
    </location>
    <ligand>
        <name>substrate</name>
    </ligand>
</feature>
<feature type="binding site" evidence="1">
    <location>
        <position position="18"/>
    </location>
    <ligand>
        <name>ATP</name>
        <dbReference type="ChEBI" id="CHEBI:30616"/>
    </ligand>
</feature>
<feature type="binding site" evidence="1">
    <location>
        <position position="42"/>
    </location>
    <ligand>
        <name>substrate</name>
    </ligand>
</feature>
<feature type="binding site" evidence="1">
    <location>
        <position position="74"/>
    </location>
    <ligand>
        <name>substrate</name>
    </ligand>
</feature>
<feature type="binding site" evidence="1">
    <location>
        <position position="88"/>
    </location>
    <ligand>
        <name>substrate</name>
    </ligand>
</feature>
<feature type="binding site" evidence="1">
    <location>
        <begin position="89"/>
        <end position="91"/>
    </location>
    <ligand>
        <name>ATP</name>
        <dbReference type="ChEBI" id="CHEBI:30616"/>
    </ligand>
</feature>
<feature type="binding site" evidence="1">
    <location>
        <position position="99"/>
    </location>
    <ligand>
        <name>ATP</name>
        <dbReference type="ChEBI" id="CHEBI:30616"/>
    </ligand>
</feature>
<feature type="binding site" evidence="1">
    <location>
        <begin position="124"/>
        <end position="130"/>
    </location>
    <ligand>
        <name>ATP</name>
        <dbReference type="ChEBI" id="CHEBI:30616"/>
    </ligand>
</feature>
<feature type="site" description="Transition state stabilizer" evidence="1">
    <location>
        <position position="18"/>
    </location>
</feature>
<name>COAD_ECO8A</name>
<accession>B7M4B8</accession>
<dbReference type="EC" id="2.7.7.3" evidence="1"/>
<dbReference type="EMBL" id="CU928160">
    <property type="protein sequence ID" value="CAR00601.1"/>
    <property type="molecule type" value="Genomic_DNA"/>
</dbReference>
<dbReference type="RefSeq" id="WP_001171866.1">
    <property type="nucleotide sequence ID" value="NC_011741.1"/>
</dbReference>
<dbReference type="SMR" id="B7M4B8"/>
<dbReference type="GeneID" id="75202203"/>
<dbReference type="KEGG" id="ecr:ECIAI1_3804"/>
<dbReference type="HOGENOM" id="CLU_100149_0_1_6"/>
<dbReference type="UniPathway" id="UPA00241">
    <property type="reaction ID" value="UER00355"/>
</dbReference>
<dbReference type="GO" id="GO:0005737">
    <property type="term" value="C:cytoplasm"/>
    <property type="evidence" value="ECO:0007669"/>
    <property type="project" value="UniProtKB-SubCell"/>
</dbReference>
<dbReference type="GO" id="GO:0005524">
    <property type="term" value="F:ATP binding"/>
    <property type="evidence" value="ECO:0007669"/>
    <property type="project" value="UniProtKB-KW"/>
</dbReference>
<dbReference type="GO" id="GO:0004595">
    <property type="term" value="F:pantetheine-phosphate adenylyltransferase activity"/>
    <property type="evidence" value="ECO:0007669"/>
    <property type="project" value="UniProtKB-UniRule"/>
</dbReference>
<dbReference type="GO" id="GO:0015937">
    <property type="term" value="P:coenzyme A biosynthetic process"/>
    <property type="evidence" value="ECO:0007669"/>
    <property type="project" value="UniProtKB-UniRule"/>
</dbReference>
<dbReference type="CDD" id="cd02163">
    <property type="entry name" value="PPAT"/>
    <property type="match status" value="1"/>
</dbReference>
<dbReference type="FunFam" id="3.40.50.620:FF:000012">
    <property type="entry name" value="Phosphopantetheine adenylyltransferase"/>
    <property type="match status" value="1"/>
</dbReference>
<dbReference type="Gene3D" id="3.40.50.620">
    <property type="entry name" value="HUPs"/>
    <property type="match status" value="1"/>
</dbReference>
<dbReference type="HAMAP" id="MF_00151">
    <property type="entry name" value="PPAT_bact"/>
    <property type="match status" value="1"/>
</dbReference>
<dbReference type="InterPro" id="IPR004821">
    <property type="entry name" value="Cyt_trans-like"/>
</dbReference>
<dbReference type="InterPro" id="IPR001980">
    <property type="entry name" value="PPAT"/>
</dbReference>
<dbReference type="InterPro" id="IPR014729">
    <property type="entry name" value="Rossmann-like_a/b/a_fold"/>
</dbReference>
<dbReference type="NCBIfam" id="TIGR01510">
    <property type="entry name" value="coaD_prev_kdtB"/>
    <property type="match status" value="1"/>
</dbReference>
<dbReference type="NCBIfam" id="TIGR00125">
    <property type="entry name" value="cyt_tran_rel"/>
    <property type="match status" value="1"/>
</dbReference>
<dbReference type="PANTHER" id="PTHR21342">
    <property type="entry name" value="PHOSPHOPANTETHEINE ADENYLYLTRANSFERASE"/>
    <property type="match status" value="1"/>
</dbReference>
<dbReference type="PANTHER" id="PTHR21342:SF1">
    <property type="entry name" value="PHOSPHOPANTETHEINE ADENYLYLTRANSFERASE"/>
    <property type="match status" value="1"/>
</dbReference>
<dbReference type="Pfam" id="PF01467">
    <property type="entry name" value="CTP_transf_like"/>
    <property type="match status" value="1"/>
</dbReference>
<dbReference type="PRINTS" id="PR01020">
    <property type="entry name" value="LPSBIOSNTHSS"/>
</dbReference>
<dbReference type="SUPFAM" id="SSF52374">
    <property type="entry name" value="Nucleotidylyl transferase"/>
    <property type="match status" value="1"/>
</dbReference>
<keyword id="KW-0067">ATP-binding</keyword>
<keyword id="KW-0173">Coenzyme A biosynthesis</keyword>
<keyword id="KW-0963">Cytoplasm</keyword>
<keyword id="KW-0460">Magnesium</keyword>
<keyword id="KW-0547">Nucleotide-binding</keyword>
<keyword id="KW-0548">Nucleotidyltransferase</keyword>
<keyword id="KW-0808">Transferase</keyword>
<sequence>MQKRAIYPGTFDPITNGHIDIVTRATQMFDHVILAIAASPSKKPMFTLEERVALAQQATAHLGNVEVVGFSDLMANFARNQHATVLIRGLRAVADFEYEMQLAHMNRHLMPELESVFLMPSKEWSFISSSLVKEVARHQGDVTHFLPENVHQALMAKLA</sequence>
<reference key="1">
    <citation type="journal article" date="2009" name="PLoS Genet.">
        <title>Organised genome dynamics in the Escherichia coli species results in highly diverse adaptive paths.</title>
        <authorList>
            <person name="Touchon M."/>
            <person name="Hoede C."/>
            <person name="Tenaillon O."/>
            <person name="Barbe V."/>
            <person name="Baeriswyl S."/>
            <person name="Bidet P."/>
            <person name="Bingen E."/>
            <person name="Bonacorsi S."/>
            <person name="Bouchier C."/>
            <person name="Bouvet O."/>
            <person name="Calteau A."/>
            <person name="Chiapello H."/>
            <person name="Clermont O."/>
            <person name="Cruveiller S."/>
            <person name="Danchin A."/>
            <person name="Diard M."/>
            <person name="Dossat C."/>
            <person name="Karoui M.E."/>
            <person name="Frapy E."/>
            <person name="Garry L."/>
            <person name="Ghigo J.M."/>
            <person name="Gilles A.M."/>
            <person name="Johnson J."/>
            <person name="Le Bouguenec C."/>
            <person name="Lescat M."/>
            <person name="Mangenot S."/>
            <person name="Martinez-Jehanne V."/>
            <person name="Matic I."/>
            <person name="Nassif X."/>
            <person name="Oztas S."/>
            <person name="Petit M.A."/>
            <person name="Pichon C."/>
            <person name="Rouy Z."/>
            <person name="Ruf C.S."/>
            <person name="Schneider D."/>
            <person name="Tourret J."/>
            <person name="Vacherie B."/>
            <person name="Vallenet D."/>
            <person name="Medigue C."/>
            <person name="Rocha E.P.C."/>
            <person name="Denamur E."/>
        </authorList>
    </citation>
    <scope>NUCLEOTIDE SEQUENCE [LARGE SCALE GENOMIC DNA]</scope>
    <source>
        <strain>IAI1</strain>
    </source>
</reference>
<comment type="function">
    <text evidence="1">Reversibly transfers an adenylyl group from ATP to 4'-phosphopantetheine, yielding dephospho-CoA (dPCoA) and pyrophosphate.</text>
</comment>
<comment type="catalytic activity">
    <reaction evidence="1">
        <text>(R)-4'-phosphopantetheine + ATP + H(+) = 3'-dephospho-CoA + diphosphate</text>
        <dbReference type="Rhea" id="RHEA:19801"/>
        <dbReference type="ChEBI" id="CHEBI:15378"/>
        <dbReference type="ChEBI" id="CHEBI:30616"/>
        <dbReference type="ChEBI" id="CHEBI:33019"/>
        <dbReference type="ChEBI" id="CHEBI:57328"/>
        <dbReference type="ChEBI" id="CHEBI:61723"/>
        <dbReference type="EC" id="2.7.7.3"/>
    </reaction>
</comment>
<comment type="cofactor">
    <cofactor evidence="1">
        <name>Mg(2+)</name>
        <dbReference type="ChEBI" id="CHEBI:18420"/>
    </cofactor>
</comment>
<comment type="pathway">
    <text evidence="1">Cofactor biosynthesis; coenzyme A biosynthesis; CoA from (R)-pantothenate: step 4/5.</text>
</comment>
<comment type="subunit">
    <text evidence="1">Homohexamer.</text>
</comment>
<comment type="subcellular location">
    <subcellularLocation>
        <location evidence="1">Cytoplasm</location>
    </subcellularLocation>
</comment>
<comment type="similarity">
    <text evidence="1">Belongs to the bacterial CoaD family.</text>
</comment>
<evidence type="ECO:0000255" key="1">
    <source>
        <dbReference type="HAMAP-Rule" id="MF_00151"/>
    </source>
</evidence>